<name>HIS2_VIBCH</name>
<dbReference type="EC" id="3.5.4.19"/>
<dbReference type="EC" id="3.6.1.31"/>
<dbReference type="EMBL" id="AE003852">
    <property type="protein sequence ID" value="AAF94298.1"/>
    <property type="molecule type" value="Genomic_DNA"/>
</dbReference>
<dbReference type="PIR" id="F82238">
    <property type="entry name" value="F82238"/>
</dbReference>
<dbReference type="RefSeq" id="NP_230784.1">
    <property type="nucleotide sequence ID" value="NC_002505.1"/>
</dbReference>
<dbReference type="RefSeq" id="WP_001067502.1">
    <property type="nucleotide sequence ID" value="NZ_LT906614.1"/>
</dbReference>
<dbReference type="SMR" id="Q9KSW7"/>
<dbReference type="STRING" id="243277.VC_1139"/>
<dbReference type="DNASU" id="2614409"/>
<dbReference type="EnsemblBacteria" id="AAF94298">
    <property type="protein sequence ID" value="AAF94298"/>
    <property type="gene ID" value="VC_1139"/>
</dbReference>
<dbReference type="GeneID" id="89514111"/>
<dbReference type="KEGG" id="vch:VC_1139"/>
<dbReference type="PATRIC" id="fig|243277.26.peg.1088"/>
<dbReference type="eggNOG" id="COG0139">
    <property type="taxonomic scope" value="Bacteria"/>
</dbReference>
<dbReference type="eggNOG" id="COG0140">
    <property type="taxonomic scope" value="Bacteria"/>
</dbReference>
<dbReference type="HOGENOM" id="CLU_048577_3_1_6"/>
<dbReference type="UniPathway" id="UPA00031">
    <property type="reaction ID" value="UER00007"/>
</dbReference>
<dbReference type="UniPathway" id="UPA00031">
    <property type="reaction ID" value="UER00008"/>
</dbReference>
<dbReference type="Proteomes" id="UP000000584">
    <property type="component" value="Chromosome 1"/>
</dbReference>
<dbReference type="GO" id="GO:0005737">
    <property type="term" value="C:cytoplasm"/>
    <property type="evidence" value="ECO:0007669"/>
    <property type="project" value="UniProtKB-SubCell"/>
</dbReference>
<dbReference type="GO" id="GO:0005524">
    <property type="term" value="F:ATP binding"/>
    <property type="evidence" value="ECO:0007669"/>
    <property type="project" value="UniProtKB-KW"/>
</dbReference>
<dbReference type="GO" id="GO:0004635">
    <property type="term" value="F:phosphoribosyl-AMP cyclohydrolase activity"/>
    <property type="evidence" value="ECO:0007669"/>
    <property type="project" value="UniProtKB-UniRule"/>
</dbReference>
<dbReference type="GO" id="GO:0004636">
    <property type="term" value="F:phosphoribosyl-ATP diphosphatase activity"/>
    <property type="evidence" value="ECO:0007669"/>
    <property type="project" value="UniProtKB-UniRule"/>
</dbReference>
<dbReference type="GO" id="GO:0000105">
    <property type="term" value="P:L-histidine biosynthetic process"/>
    <property type="evidence" value="ECO:0007669"/>
    <property type="project" value="UniProtKB-UniRule"/>
</dbReference>
<dbReference type="CDD" id="cd11534">
    <property type="entry name" value="NTP-PPase_HisIE_like"/>
    <property type="match status" value="1"/>
</dbReference>
<dbReference type="FunFam" id="1.10.287.1080:FF:000002">
    <property type="entry name" value="Histidine biosynthesis bifunctional protein HisIE"/>
    <property type="match status" value="1"/>
</dbReference>
<dbReference type="FunFam" id="3.10.20.810:FF:000001">
    <property type="entry name" value="Histidine biosynthesis bifunctional protein HisIE"/>
    <property type="match status" value="1"/>
</dbReference>
<dbReference type="Gene3D" id="1.10.287.1080">
    <property type="entry name" value="MazG-like"/>
    <property type="match status" value="1"/>
</dbReference>
<dbReference type="Gene3D" id="3.10.20.810">
    <property type="entry name" value="Phosphoribosyl-AMP cyclohydrolase"/>
    <property type="match status" value="1"/>
</dbReference>
<dbReference type="HAMAP" id="MF_01020">
    <property type="entry name" value="HisE"/>
    <property type="match status" value="1"/>
</dbReference>
<dbReference type="HAMAP" id="MF_01019">
    <property type="entry name" value="HisIE"/>
    <property type="match status" value="1"/>
</dbReference>
<dbReference type="InterPro" id="IPR023019">
    <property type="entry name" value="His_synth_HisIE"/>
</dbReference>
<dbReference type="InterPro" id="IPR008179">
    <property type="entry name" value="HisE"/>
</dbReference>
<dbReference type="InterPro" id="IPR021130">
    <property type="entry name" value="PRib-ATP_PPHydrolase-like"/>
</dbReference>
<dbReference type="InterPro" id="IPR002496">
    <property type="entry name" value="PRib_AMP_CycHydrolase_dom"/>
</dbReference>
<dbReference type="InterPro" id="IPR038019">
    <property type="entry name" value="PRib_AMP_CycHydrolase_sf"/>
</dbReference>
<dbReference type="NCBIfam" id="TIGR03188">
    <property type="entry name" value="histidine_hisI"/>
    <property type="match status" value="1"/>
</dbReference>
<dbReference type="NCBIfam" id="NF000768">
    <property type="entry name" value="PRK00051.1"/>
    <property type="match status" value="1"/>
</dbReference>
<dbReference type="NCBIfam" id="NF002747">
    <property type="entry name" value="PRK02759.1"/>
    <property type="match status" value="1"/>
</dbReference>
<dbReference type="PANTHER" id="PTHR42945">
    <property type="entry name" value="HISTIDINE BIOSYNTHESIS BIFUNCTIONAL PROTEIN"/>
    <property type="match status" value="1"/>
</dbReference>
<dbReference type="PANTHER" id="PTHR42945:SF9">
    <property type="entry name" value="HISTIDINE BIOSYNTHESIS BIFUNCTIONAL PROTEIN HISIE"/>
    <property type="match status" value="1"/>
</dbReference>
<dbReference type="Pfam" id="PF01502">
    <property type="entry name" value="PRA-CH"/>
    <property type="match status" value="1"/>
</dbReference>
<dbReference type="Pfam" id="PF01503">
    <property type="entry name" value="PRA-PH"/>
    <property type="match status" value="1"/>
</dbReference>
<dbReference type="SUPFAM" id="SSF101386">
    <property type="entry name" value="all-alpha NTP pyrophosphatases"/>
    <property type="match status" value="1"/>
</dbReference>
<dbReference type="SUPFAM" id="SSF141734">
    <property type="entry name" value="HisI-like"/>
    <property type="match status" value="1"/>
</dbReference>
<reference key="1">
    <citation type="journal article" date="2000" name="Nature">
        <title>DNA sequence of both chromosomes of the cholera pathogen Vibrio cholerae.</title>
        <authorList>
            <person name="Heidelberg J.F."/>
            <person name="Eisen J.A."/>
            <person name="Nelson W.C."/>
            <person name="Clayton R.A."/>
            <person name="Gwinn M.L."/>
            <person name="Dodson R.J."/>
            <person name="Haft D.H."/>
            <person name="Hickey E.K."/>
            <person name="Peterson J.D."/>
            <person name="Umayam L.A."/>
            <person name="Gill S.R."/>
            <person name="Nelson K.E."/>
            <person name="Read T.D."/>
            <person name="Tettelin H."/>
            <person name="Richardson D.L."/>
            <person name="Ermolaeva M.D."/>
            <person name="Vamathevan J.J."/>
            <person name="Bass S."/>
            <person name="Qin H."/>
            <person name="Dragoi I."/>
            <person name="Sellers P."/>
            <person name="McDonald L.A."/>
            <person name="Utterback T.R."/>
            <person name="Fleischmann R.D."/>
            <person name="Nierman W.C."/>
            <person name="White O."/>
            <person name="Salzberg S.L."/>
            <person name="Smith H.O."/>
            <person name="Colwell R.R."/>
            <person name="Mekalanos J.J."/>
            <person name="Venter J.C."/>
            <person name="Fraser C.M."/>
        </authorList>
    </citation>
    <scope>NUCLEOTIDE SEQUENCE [LARGE SCALE GENOMIC DNA]</scope>
    <source>
        <strain>ATCC 39315 / El Tor Inaba N16961</strain>
    </source>
</reference>
<gene>
    <name type="primary">hisI</name>
    <name type="synonym">hisIE</name>
    <name type="ordered locus">VC_1139</name>
</gene>
<organism>
    <name type="scientific">Vibrio cholerae serotype O1 (strain ATCC 39315 / El Tor Inaba N16961)</name>
    <dbReference type="NCBI Taxonomy" id="243277"/>
    <lineage>
        <taxon>Bacteria</taxon>
        <taxon>Pseudomonadati</taxon>
        <taxon>Pseudomonadota</taxon>
        <taxon>Gammaproteobacteria</taxon>
        <taxon>Vibrionales</taxon>
        <taxon>Vibrionaceae</taxon>
        <taxon>Vibrio</taxon>
    </lineage>
</organism>
<accession>Q9KSW7</accession>
<evidence type="ECO:0000250" key="1"/>
<evidence type="ECO:0000305" key="2"/>
<sequence>MNPASPFATLTDRIDWQKVDGLVPAIVQDFQSSQVLMMGYMNPEALQKTLDTQQVTFFSRSKQRLWTKGETSGHVLQLKNIALDCDQDTLLVKVNPIGPTCHTGTVTCWDGDAQEESQMVWLHQLEQLLAERKNADPSSSYTASLYARGTKRIAQKVGEEGVEVALAATAGDKEELICESADLMYHLLVLLQEQGLAMNDVINKLKERHK</sequence>
<protein>
    <recommendedName>
        <fullName>Histidine biosynthesis bifunctional protein HisIE</fullName>
    </recommendedName>
    <domain>
        <recommendedName>
            <fullName>Phosphoribosyl-AMP cyclohydrolase</fullName>
            <shortName>PRA-CH</shortName>
            <ecNumber>3.5.4.19</ecNumber>
        </recommendedName>
    </domain>
    <domain>
        <recommendedName>
            <fullName>Phosphoribosyl-ATP pyrophosphatase</fullName>
            <shortName>PRA-PH</shortName>
            <ecNumber>3.6.1.31</ecNumber>
        </recommendedName>
    </domain>
</protein>
<feature type="chain" id="PRO_0000136445" description="Histidine biosynthesis bifunctional protein HisIE">
    <location>
        <begin position="1"/>
        <end position="210"/>
    </location>
</feature>
<feature type="region of interest" description="Phosphoribosyl-AMP cyclohydrolase">
    <location>
        <begin position="1"/>
        <end position="121"/>
    </location>
</feature>
<feature type="region of interest" description="Phosphoribosyl-ATP pyrophosphohydrolase">
    <location>
        <begin position="122"/>
        <end position="210"/>
    </location>
</feature>
<proteinExistence type="inferred from homology"/>
<keyword id="KW-0028">Amino-acid biosynthesis</keyword>
<keyword id="KW-0067">ATP-binding</keyword>
<keyword id="KW-0963">Cytoplasm</keyword>
<keyword id="KW-0368">Histidine biosynthesis</keyword>
<keyword id="KW-0378">Hydrolase</keyword>
<keyword id="KW-0511">Multifunctional enzyme</keyword>
<keyword id="KW-0547">Nucleotide-binding</keyword>
<keyword id="KW-1185">Reference proteome</keyword>
<comment type="catalytic activity">
    <reaction>
        <text>1-(5-phospho-beta-D-ribosyl)-ATP + H2O = 1-(5-phospho-beta-D-ribosyl)-5'-AMP + diphosphate + H(+)</text>
        <dbReference type="Rhea" id="RHEA:22828"/>
        <dbReference type="ChEBI" id="CHEBI:15377"/>
        <dbReference type="ChEBI" id="CHEBI:15378"/>
        <dbReference type="ChEBI" id="CHEBI:33019"/>
        <dbReference type="ChEBI" id="CHEBI:59457"/>
        <dbReference type="ChEBI" id="CHEBI:73183"/>
        <dbReference type="EC" id="3.6.1.31"/>
    </reaction>
</comment>
<comment type="catalytic activity">
    <reaction>
        <text>1-(5-phospho-beta-D-ribosyl)-5'-AMP + H2O = 1-(5-phospho-beta-D-ribosyl)-5-[(5-phospho-beta-D-ribosylamino)methylideneamino]imidazole-4-carboxamide</text>
        <dbReference type="Rhea" id="RHEA:20049"/>
        <dbReference type="ChEBI" id="CHEBI:15377"/>
        <dbReference type="ChEBI" id="CHEBI:58435"/>
        <dbReference type="ChEBI" id="CHEBI:59457"/>
        <dbReference type="EC" id="3.5.4.19"/>
    </reaction>
</comment>
<comment type="pathway">
    <text>Amino-acid biosynthesis; L-histidine biosynthesis; L-histidine from 5-phospho-alpha-D-ribose 1-diphosphate: step 2/9.</text>
</comment>
<comment type="pathway">
    <text>Amino-acid biosynthesis; L-histidine biosynthesis; L-histidine from 5-phospho-alpha-D-ribose 1-diphosphate: step 3/9.</text>
</comment>
<comment type="subcellular location">
    <subcellularLocation>
        <location evidence="1">Cytoplasm</location>
    </subcellularLocation>
</comment>
<comment type="similarity">
    <text evidence="2">In the N-terminal section; belongs to the PRA-CH family.</text>
</comment>
<comment type="similarity">
    <text evidence="2">In the C-terminal section; belongs to the PRA-PH family.</text>
</comment>